<reference key="1">
    <citation type="journal article" date="1991" name="J. Biol. Chem.">
        <title>Co-regulation of a gene homologous to early light-induced genes in higher plants and beta-carotene biosynthesis in the alga Dunaliella bardawil.</title>
        <authorList>
            <person name="Lers A."/>
            <person name="Levy H."/>
            <person name="Zamir A."/>
        </authorList>
    </citation>
    <scope>NUCLEOTIDE SEQUENCE [GENOMIC DNA]</scope>
</reference>
<reference key="2">
    <citation type="journal article" date="1993" name="J. Biol. Chem.">
        <title>Cbr, an algal homolog of plant early light-induced proteins, is a putative zeaxanthin binding protein.</title>
        <authorList>
            <person name="Levy H."/>
            <person name="Tal T."/>
            <person name="Shaish A."/>
            <person name="Zamir A."/>
        </authorList>
    </citation>
    <scope>CHARACTERIZATION</scope>
</reference>
<feature type="transit peptide" description="Chloroplast" evidence="1">
    <location>
        <begin position="1"/>
        <end status="unknown"/>
    </location>
</feature>
<feature type="chain" id="PRO_0000007804" description="Carotene biosynthesis-related protein CBR, chloroplastic">
    <location>
        <begin status="unknown"/>
        <end position="172"/>
    </location>
</feature>
<feature type="transmembrane region" description="Helical" evidence="1">
    <location>
        <begin position="111"/>
        <end position="131"/>
    </location>
</feature>
<feature type="transmembrane region" description="Helical" evidence="1">
    <location>
        <begin position="152"/>
        <end position="172"/>
    </location>
</feature>
<feature type="region of interest" description="Disordered" evidence="2">
    <location>
        <begin position="41"/>
        <end position="66"/>
    </location>
</feature>
<feature type="compositionally biased region" description="Pro residues" evidence="2">
    <location>
        <begin position="46"/>
        <end position="63"/>
    </location>
</feature>
<gene>
    <name type="primary">CBR</name>
</gene>
<accession>P27516</accession>
<name>CBR_DUNSA</name>
<sequence length="172" mass="17887">MQLHMNLPTSRIAAGASINVRPAPLLRTAAPKRVCKHIVRAENNPSTPPPSSPSPPPPPPTPAAPTVTEVMGFSGAPEIINGRLAMLGFVAALGAELSTGESVLTQLGDQPTLIALTFVLFSAASLIPAFARRKGDAMGPFTPDAEMTNGRFAMIGFAAMLVYEGIQGIALF</sequence>
<organism>
    <name type="scientific">Dunaliella salina</name>
    <name type="common">Green alga</name>
    <name type="synonym">Protococcus salinus</name>
    <dbReference type="NCBI Taxonomy" id="3046"/>
    <lineage>
        <taxon>Eukaryota</taxon>
        <taxon>Viridiplantae</taxon>
        <taxon>Chlorophyta</taxon>
        <taxon>core chlorophytes</taxon>
        <taxon>Chlorophyceae</taxon>
        <taxon>CS clade</taxon>
        <taxon>Chlamydomonadales</taxon>
        <taxon>Dunaliellaceae</taxon>
        <taxon>Dunaliella</taxon>
    </lineage>
</organism>
<protein>
    <recommendedName>
        <fullName>Carotene biosynthesis-related protein CBR, chloroplastic</fullName>
    </recommendedName>
</protein>
<keyword id="KW-0150">Chloroplast</keyword>
<keyword id="KW-0472">Membrane</keyword>
<keyword id="KW-0934">Plastid</keyword>
<keyword id="KW-0809">Transit peptide</keyword>
<keyword id="KW-0812">Transmembrane</keyword>
<keyword id="KW-1133">Transmembrane helix</keyword>
<evidence type="ECO:0000255" key="1"/>
<evidence type="ECO:0000256" key="2">
    <source>
        <dbReference type="SAM" id="MobiDB-lite"/>
    </source>
</evidence>
<evidence type="ECO:0000305" key="3"/>
<proteinExistence type="evidence at protein level"/>
<comment type="function">
    <text>Putative zeaxanthin binding protein. That forms photoprotective complexes within the light-harvesting antennae.</text>
</comment>
<comment type="subcellular location">
    <subcellularLocation>
        <location>Plastid</location>
        <location>Chloroplast membrane</location>
        <topology>Multi-pass membrane protein</topology>
    </subcellularLocation>
</comment>
<comment type="similarity">
    <text evidence="3">Belongs to the ELIP/psbS family.</text>
</comment>
<dbReference type="EMBL" id="L32871">
    <property type="protein sequence ID" value="AAA33279.1"/>
    <property type="molecule type" value="Genomic_DNA"/>
</dbReference>
<dbReference type="EMBL" id="M77506">
    <property type="protein sequence ID" value="AAA33279.1"/>
    <property type="status" value="JOINED"/>
    <property type="molecule type" value="Genomic_DNA"/>
</dbReference>
<dbReference type="PIR" id="A39458">
    <property type="entry name" value="A39458"/>
</dbReference>
<dbReference type="SMR" id="P27516"/>
<dbReference type="GO" id="GO:0031969">
    <property type="term" value="C:chloroplast membrane"/>
    <property type="evidence" value="ECO:0007669"/>
    <property type="project" value="UniProtKB-SubCell"/>
</dbReference>
<dbReference type="Gene3D" id="1.10.3460.10">
    <property type="entry name" value="Chlorophyll a/b binding protein domain"/>
    <property type="match status" value="1"/>
</dbReference>
<dbReference type="InterPro" id="IPR022796">
    <property type="entry name" value="Chloroa_b-bind"/>
</dbReference>
<dbReference type="PANTHER" id="PTHR14154">
    <property type="entry name" value="UPF0041 BRAIN PROTEIN 44-RELATED"/>
    <property type="match status" value="1"/>
</dbReference>
<dbReference type="Pfam" id="PF00504">
    <property type="entry name" value="Chloroa_b-bind"/>
    <property type="match status" value="1"/>
</dbReference>
<dbReference type="SUPFAM" id="SSF103511">
    <property type="entry name" value="Chlorophyll a-b binding protein"/>
    <property type="match status" value="1"/>
</dbReference>